<dbReference type="EMBL" id="M11025">
    <property type="protein sequence ID" value="AAB59519.1"/>
    <property type="molecule type" value="mRNA"/>
</dbReference>
<dbReference type="EMBL" id="U97197">
    <property type="protein sequence ID" value="AAB58308.1"/>
    <property type="molecule type" value="mRNA"/>
</dbReference>
<dbReference type="EMBL" id="X55283">
    <property type="protein sequence ID" value="CAA38997.1"/>
    <property type="molecule type" value="mRNA"/>
</dbReference>
<dbReference type="EMBL" id="AC120057">
    <property type="status" value="NOT_ANNOTATED_CDS"/>
    <property type="molecule type" value="Genomic_DNA"/>
</dbReference>
<dbReference type="EMBL" id="CH471108">
    <property type="protein sequence ID" value="EAW90259.1"/>
    <property type="molecule type" value="Genomic_DNA"/>
</dbReference>
<dbReference type="EMBL" id="CH471108">
    <property type="protein sequence ID" value="EAW90260.1"/>
    <property type="molecule type" value="Genomic_DNA"/>
</dbReference>
<dbReference type="EMBL" id="CH471108">
    <property type="protein sequence ID" value="EAW90261.1"/>
    <property type="molecule type" value="Genomic_DNA"/>
</dbReference>
<dbReference type="EMBL" id="CH471108">
    <property type="protein sequence ID" value="EAW90263.1"/>
    <property type="molecule type" value="Genomic_DNA"/>
</dbReference>
<dbReference type="EMBL" id="BC017251">
    <property type="protein sequence ID" value="AAH17251.1"/>
    <property type="molecule type" value="mRNA"/>
</dbReference>
<dbReference type="CCDS" id="CCDS11088.1">
    <molecule id="P07307-3"/>
</dbReference>
<dbReference type="CCDS" id="CCDS32544.1">
    <molecule id="P07307-1"/>
</dbReference>
<dbReference type="CCDS" id="CCDS45598.1">
    <molecule id="P07307-2"/>
</dbReference>
<dbReference type="PIR" id="A25179">
    <property type="entry name" value="LNHU2A"/>
</dbReference>
<dbReference type="RefSeq" id="NP_001172.1">
    <property type="nucleotide sequence ID" value="NM_001181.4"/>
</dbReference>
<dbReference type="RefSeq" id="NP_001188281.1">
    <property type="nucleotide sequence ID" value="NM_001201352.1"/>
</dbReference>
<dbReference type="RefSeq" id="NP_550434.1">
    <property type="nucleotide sequence ID" value="NM_080912.3"/>
</dbReference>
<dbReference type="RefSeq" id="NP_550435.1">
    <molecule id="P07307-3"/>
    <property type="nucleotide sequence ID" value="NM_080913.3"/>
</dbReference>
<dbReference type="RefSeq" id="NP_550436.1">
    <property type="nucleotide sequence ID" value="NM_080914.2"/>
</dbReference>
<dbReference type="RefSeq" id="XP_005256705.1">
    <property type="nucleotide sequence ID" value="XM_005256648.2"/>
</dbReference>
<dbReference type="RefSeq" id="XP_006721589.1">
    <molecule id="P07307-3"/>
    <property type="nucleotide sequence ID" value="XM_006721526.3"/>
</dbReference>
<dbReference type="RefSeq" id="XP_016880140.1">
    <molecule id="P07307-2"/>
    <property type="nucleotide sequence ID" value="XM_017024651.2"/>
</dbReference>
<dbReference type="RefSeq" id="XP_016880141.1">
    <property type="nucleotide sequence ID" value="XM_017024652.1"/>
</dbReference>
<dbReference type="RefSeq" id="XP_016880142.1">
    <property type="nucleotide sequence ID" value="XM_017024653.1"/>
</dbReference>
<dbReference type="RefSeq" id="XP_047292047.1">
    <molecule id="P07307-2"/>
    <property type="nucleotide sequence ID" value="XM_047436091.1"/>
</dbReference>
<dbReference type="RefSeq" id="XP_054172143.1">
    <molecule id="P07307-2"/>
    <property type="nucleotide sequence ID" value="XM_054316168.1"/>
</dbReference>
<dbReference type="RefSeq" id="XP_054172144.1">
    <molecule id="P07307-2"/>
    <property type="nucleotide sequence ID" value="XM_054316169.1"/>
</dbReference>
<dbReference type="RefSeq" id="XP_054172145.1">
    <molecule id="P07307-3"/>
    <property type="nucleotide sequence ID" value="XM_054316170.1"/>
</dbReference>
<dbReference type="PDB" id="8URF">
    <property type="method" value="X-ray"/>
    <property type="resolution" value="1.90 A"/>
    <property type="chains" value="A=177-311"/>
</dbReference>
<dbReference type="PDBsum" id="8URF"/>
<dbReference type="SMR" id="P07307"/>
<dbReference type="BioGRID" id="106925">
    <property type="interactions" value="88"/>
</dbReference>
<dbReference type="FunCoup" id="P07307">
    <property type="interactions" value="118"/>
</dbReference>
<dbReference type="IntAct" id="P07307">
    <property type="interactions" value="66"/>
</dbReference>
<dbReference type="STRING" id="9606.ENSP00000347140"/>
<dbReference type="DrugBank" id="DB00025">
    <property type="generic name" value="Antihemophilic factor, human recombinant"/>
</dbReference>
<dbReference type="DrugBank" id="DB13998">
    <property type="generic name" value="Lonoctocog alfa"/>
</dbReference>
<dbReference type="DrugBank" id="DB13999">
    <property type="generic name" value="Moroctocog alfa"/>
</dbReference>
<dbReference type="GlyConnect" id="1920">
    <property type="glycosylation" value="9 N-Linked glycans (1 site)"/>
</dbReference>
<dbReference type="GlyCosmos" id="P07307">
    <property type="glycosylation" value="3 sites, 9 glycans"/>
</dbReference>
<dbReference type="GlyGen" id="P07307">
    <property type="glycosylation" value="3 sites, 13 N-linked glycans (2 sites)"/>
</dbReference>
<dbReference type="iPTMnet" id="P07307"/>
<dbReference type="PhosphoSitePlus" id="P07307"/>
<dbReference type="SwissPalm" id="P07307"/>
<dbReference type="BioMuta" id="ASGR2"/>
<dbReference type="DMDM" id="218511923"/>
<dbReference type="CPTAC" id="CPTAC-1176"/>
<dbReference type="jPOST" id="P07307"/>
<dbReference type="MassIVE" id="P07307"/>
<dbReference type="PaxDb" id="9606-ENSP00000347140"/>
<dbReference type="PeptideAtlas" id="P07307"/>
<dbReference type="ProteomicsDB" id="51981">
    <molecule id="P07307-1"/>
</dbReference>
<dbReference type="ProteomicsDB" id="51982">
    <molecule id="P07307-2"/>
</dbReference>
<dbReference type="ProteomicsDB" id="51983">
    <molecule id="P07307-3"/>
</dbReference>
<dbReference type="Antibodypedia" id="2656">
    <property type="antibodies" value="305 antibodies from 30 providers"/>
</dbReference>
<dbReference type="DNASU" id="433"/>
<dbReference type="Ensembl" id="ENST00000254850.11">
    <molecule id="P07307-3"/>
    <property type="protein sequence ID" value="ENSP00000254850.7"/>
    <property type="gene ID" value="ENSG00000161944.17"/>
</dbReference>
<dbReference type="Ensembl" id="ENST00000355035.9">
    <molecule id="P07307-1"/>
    <property type="protein sequence ID" value="ENSP00000347140.5"/>
    <property type="gene ID" value="ENSG00000161944.17"/>
</dbReference>
<dbReference type="Ensembl" id="ENST00000446679.6">
    <molecule id="P07307-2"/>
    <property type="protein sequence ID" value="ENSP00000405844.2"/>
    <property type="gene ID" value="ENSG00000161944.17"/>
</dbReference>
<dbReference type="GeneID" id="433"/>
<dbReference type="KEGG" id="hsa:433"/>
<dbReference type="UCSC" id="uc002gen.2">
    <molecule id="P07307-1"/>
    <property type="organism name" value="human"/>
</dbReference>
<dbReference type="AGR" id="HGNC:743"/>
<dbReference type="CTD" id="433"/>
<dbReference type="DisGeNET" id="433"/>
<dbReference type="GeneCards" id="ASGR2"/>
<dbReference type="HGNC" id="HGNC:743">
    <property type="gene designation" value="ASGR2"/>
</dbReference>
<dbReference type="HPA" id="ENSG00000161944">
    <property type="expression patterns" value="Tissue enriched (liver)"/>
</dbReference>
<dbReference type="MIM" id="108361">
    <property type="type" value="gene"/>
</dbReference>
<dbReference type="neXtProt" id="NX_P07307"/>
<dbReference type="OpenTargets" id="ENSG00000161944"/>
<dbReference type="PharmGKB" id="PA25043"/>
<dbReference type="VEuPathDB" id="HostDB:ENSG00000161944"/>
<dbReference type="eggNOG" id="KOG4297">
    <property type="taxonomic scope" value="Eukaryota"/>
</dbReference>
<dbReference type="GeneTree" id="ENSGT00940000162310"/>
<dbReference type="HOGENOM" id="CLU_049894_2_0_1"/>
<dbReference type="InParanoid" id="P07307"/>
<dbReference type="OMA" id="RTLTCQM"/>
<dbReference type="OrthoDB" id="2142683at2759"/>
<dbReference type="PAN-GO" id="P07307">
    <property type="GO annotations" value="3 GO annotations based on evolutionary models"/>
</dbReference>
<dbReference type="PhylomeDB" id="P07307"/>
<dbReference type="TreeFam" id="TF352155"/>
<dbReference type="PathwayCommons" id="P07307"/>
<dbReference type="Reactome" id="R-HSA-446203">
    <property type="pathway name" value="Asparagine N-linked glycosylation"/>
</dbReference>
<dbReference type="SignaLink" id="P07307"/>
<dbReference type="BioGRID-ORCS" id="433">
    <property type="hits" value="11 hits in 1148 CRISPR screens"/>
</dbReference>
<dbReference type="ChiTaRS" id="ASGR2">
    <property type="organism name" value="human"/>
</dbReference>
<dbReference type="GenomeRNAi" id="433"/>
<dbReference type="Pharos" id="P07307">
    <property type="development level" value="Tbio"/>
</dbReference>
<dbReference type="PRO" id="PR:P07307"/>
<dbReference type="Proteomes" id="UP000005640">
    <property type="component" value="Chromosome 17"/>
</dbReference>
<dbReference type="RNAct" id="P07307">
    <property type="molecule type" value="protein"/>
</dbReference>
<dbReference type="Bgee" id="ENSG00000161944">
    <property type="expression patterns" value="Expressed in right lobe of liver and 122 other cell types or tissues"/>
</dbReference>
<dbReference type="ExpressionAtlas" id="P07307">
    <property type="expression patterns" value="baseline and differential"/>
</dbReference>
<dbReference type="GO" id="GO:0044322">
    <property type="term" value="C:endoplasmic reticulum quality control compartment"/>
    <property type="evidence" value="ECO:0000314"/>
    <property type="project" value="UniProtKB"/>
</dbReference>
<dbReference type="GO" id="GO:0009897">
    <property type="term" value="C:external side of plasma membrane"/>
    <property type="evidence" value="ECO:0000318"/>
    <property type="project" value="GO_Central"/>
</dbReference>
<dbReference type="GO" id="GO:0048471">
    <property type="term" value="C:perinuclear region of cytoplasm"/>
    <property type="evidence" value="ECO:0000314"/>
    <property type="project" value="UniProtKB"/>
</dbReference>
<dbReference type="GO" id="GO:0005886">
    <property type="term" value="C:plasma membrane"/>
    <property type="evidence" value="ECO:0000304"/>
    <property type="project" value="Reactome"/>
</dbReference>
<dbReference type="GO" id="GO:0004873">
    <property type="term" value="F:asialoglycoprotein receptor activity"/>
    <property type="evidence" value="ECO:0000304"/>
    <property type="project" value="UniProtKB"/>
</dbReference>
<dbReference type="GO" id="GO:0005537">
    <property type="term" value="F:D-mannose binding"/>
    <property type="evidence" value="ECO:0000318"/>
    <property type="project" value="GO_Central"/>
</dbReference>
<dbReference type="GO" id="GO:0042806">
    <property type="term" value="F:fucose binding"/>
    <property type="evidence" value="ECO:0000318"/>
    <property type="project" value="GO_Central"/>
</dbReference>
<dbReference type="GO" id="GO:0038187">
    <property type="term" value="F:pattern recognition receptor activity"/>
    <property type="evidence" value="ECO:0000318"/>
    <property type="project" value="GO_Central"/>
</dbReference>
<dbReference type="GO" id="GO:0007166">
    <property type="term" value="P:cell surface receptor signaling pathway"/>
    <property type="evidence" value="ECO:0000304"/>
    <property type="project" value="ProtInc"/>
</dbReference>
<dbReference type="GO" id="GO:0006897">
    <property type="term" value="P:endocytosis"/>
    <property type="evidence" value="ECO:0007669"/>
    <property type="project" value="UniProtKB-KW"/>
</dbReference>
<dbReference type="GO" id="GO:0006955">
    <property type="term" value="P:immune response"/>
    <property type="evidence" value="ECO:0000318"/>
    <property type="project" value="GO_Central"/>
</dbReference>
<dbReference type="CDD" id="cd03590">
    <property type="entry name" value="CLECT_DC-SIGN_like"/>
    <property type="match status" value="1"/>
</dbReference>
<dbReference type="FunFam" id="3.10.100.10:FF:000041">
    <property type="entry name" value="Asialoglycoprotein receptor 1"/>
    <property type="match status" value="1"/>
</dbReference>
<dbReference type="Gene3D" id="3.10.100.10">
    <property type="entry name" value="Mannose-Binding Protein A, subunit A"/>
    <property type="match status" value="1"/>
</dbReference>
<dbReference type="InterPro" id="IPR001304">
    <property type="entry name" value="C-type_lectin-like"/>
</dbReference>
<dbReference type="InterPro" id="IPR016186">
    <property type="entry name" value="C-type_lectin-like/link_sf"/>
</dbReference>
<dbReference type="InterPro" id="IPR050111">
    <property type="entry name" value="C-type_lectin/snaclec_domain"/>
</dbReference>
<dbReference type="InterPro" id="IPR018378">
    <property type="entry name" value="C-type_lectin_CS"/>
</dbReference>
<dbReference type="InterPro" id="IPR033989">
    <property type="entry name" value="CD209-like_CTLD"/>
</dbReference>
<dbReference type="InterPro" id="IPR016187">
    <property type="entry name" value="CTDL_fold"/>
</dbReference>
<dbReference type="PANTHER" id="PTHR22803">
    <property type="entry name" value="MANNOSE, PHOSPHOLIPASE, LECTIN RECEPTOR RELATED"/>
    <property type="match status" value="1"/>
</dbReference>
<dbReference type="Pfam" id="PF00059">
    <property type="entry name" value="Lectin_C"/>
    <property type="match status" value="1"/>
</dbReference>
<dbReference type="Pfam" id="PF03954">
    <property type="entry name" value="Lectin_N"/>
    <property type="match status" value="1"/>
</dbReference>
<dbReference type="SMART" id="SM00034">
    <property type="entry name" value="CLECT"/>
    <property type="match status" value="1"/>
</dbReference>
<dbReference type="SUPFAM" id="SSF56436">
    <property type="entry name" value="C-type lectin-like"/>
    <property type="match status" value="1"/>
</dbReference>
<dbReference type="PROSITE" id="PS00615">
    <property type="entry name" value="C_TYPE_LECTIN_1"/>
    <property type="match status" value="1"/>
</dbReference>
<dbReference type="PROSITE" id="PS50041">
    <property type="entry name" value="C_TYPE_LECTIN_2"/>
    <property type="match status" value="1"/>
</dbReference>
<keyword id="KW-0002">3D-structure</keyword>
<keyword id="KW-0025">Alternative splicing</keyword>
<keyword id="KW-0106">Calcium</keyword>
<keyword id="KW-1015">Disulfide bond</keyword>
<keyword id="KW-0254">Endocytosis</keyword>
<keyword id="KW-0325">Glycoprotein</keyword>
<keyword id="KW-0945">Host-virus interaction</keyword>
<keyword id="KW-0430">Lectin</keyword>
<keyword id="KW-0449">Lipoprotein</keyword>
<keyword id="KW-0472">Membrane</keyword>
<keyword id="KW-0564">Palmitate</keyword>
<keyword id="KW-0597">Phosphoprotein</keyword>
<keyword id="KW-1267">Proteomics identification</keyword>
<keyword id="KW-0675">Receptor</keyword>
<keyword id="KW-1185">Reference proteome</keyword>
<keyword id="KW-0735">Signal-anchor</keyword>
<keyword id="KW-0812">Transmembrane</keyword>
<keyword id="KW-1133">Transmembrane helix</keyword>
<comment type="function">
    <text>Mediates the endocytosis of plasma glycoproteins to which the terminal sialic acid residue on their complex carbohydrate moieties has been removed. The receptor recognizes terminal galactose and N-acetylgalactosamine units. After ligand binding to the receptor, the resulting complex is internalized and transported to a sorting organelle, where receptor and ligand are disassociated. The receptor then returns to the cell membrane surface.</text>
</comment>
<comment type="subunit">
    <text evidence="6">The functioning ligand-binding unit of this receptor is thought to be at least a dimer. Interacts with LASS2.</text>
</comment>
<comment type="subunit">
    <text evidence="10">(Microbial infection) Interacts with hepatitis E virus capsid protein ORF2.</text>
</comment>
<comment type="interaction">
    <interactant intactId="EBI-1172636">
        <id>P07307</id>
    </interactant>
    <interactant intactId="EBI-1057080">
        <id>Q96G23</id>
        <label>CERS2</label>
    </interactant>
    <organismsDiffer>false</organismsDiffer>
    <experiments>3</experiments>
</comment>
<comment type="interaction">
    <interactant intactId="EBI-12808270">
        <id>P07307-3</id>
    </interactant>
    <interactant intactId="EBI-10225815">
        <id>Q08AM2</id>
        <label>ADAM33</label>
    </interactant>
    <organismsDiffer>false</organismsDiffer>
    <experiments>3</experiments>
</comment>
<comment type="interaction">
    <interactant intactId="EBI-12808270">
        <id>P07307-3</id>
    </interactant>
    <interactant intactId="EBI-10827839">
        <id>Q15848</id>
        <label>ADIPOQ</label>
    </interactant>
    <organismsDiffer>false</organismsDiffer>
    <experiments>3</experiments>
</comment>
<comment type="interaction">
    <interactant intactId="EBI-12808270">
        <id>P07307-3</id>
    </interactant>
    <interactant intactId="EBI-11957045">
        <id>Q9NVV5-2</id>
        <label>AIG1</label>
    </interactant>
    <organismsDiffer>false</organismsDiffer>
    <experiments>3</experiments>
</comment>
<comment type="interaction">
    <interactant intactId="EBI-12808270">
        <id>P07307-3</id>
    </interactant>
    <interactant intactId="EBI-721179">
        <id>P27449</id>
        <label>ATP6V0C</label>
    </interactant>
    <organismsDiffer>false</organismsDiffer>
    <experiments>3</experiments>
</comment>
<comment type="interaction">
    <interactant intactId="EBI-12808270">
        <id>P07307-3</id>
    </interactant>
    <interactant intactId="EBI-749204">
        <id>O15155</id>
        <label>BET1</label>
    </interactant>
    <organismsDiffer>false</organismsDiffer>
    <experiments>3</experiments>
</comment>
<comment type="interaction">
    <interactant intactId="EBI-12808270">
        <id>P07307-3</id>
    </interactant>
    <interactant intactId="EBI-6657396">
        <id>P19397</id>
        <label>CD53</label>
    </interactant>
    <organismsDiffer>false</organismsDiffer>
    <experiments>3</experiments>
</comment>
<comment type="interaction">
    <interactant intactId="EBI-12808270">
        <id>P07307-3</id>
    </interactant>
    <interactant intactId="EBI-11977093">
        <id>Q6ZS10</id>
        <label>CLEC17A</label>
    </interactant>
    <organismsDiffer>false</organismsDiffer>
    <experiments>3</experiments>
</comment>
<comment type="interaction">
    <interactant intactId="EBI-12808270">
        <id>P07307-3</id>
    </interactant>
    <interactant intactId="EBI-11989440">
        <id>Q9BXN2-6</id>
        <label>CLEC7A</label>
    </interactant>
    <organismsDiffer>false</organismsDiffer>
    <experiments>3</experiments>
</comment>
<comment type="interaction">
    <interactant intactId="EBI-12808270">
        <id>P07307-3</id>
    </interactant>
    <interactant intactId="EBI-4319440">
        <id>P54849</id>
        <label>EMP1</label>
    </interactant>
    <organismsDiffer>false</organismsDiffer>
    <experiments>3</experiments>
</comment>
<comment type="interaction">
    <interactant intactId="EBI-12808270">
        <id>P07307-3</id>
    </interactant>
    <interactant intactId="EBI-11337888">
        <id>Q7L5A8</id>
        <label>FA2H</label>
    </interactant>
    <organismsDiffer>false</organismsDiffer>
    <experiments>3</experiments>
</comment>
<comment type="interaction">
    <interactant intactId="EBI-12808270">
        <id>P07307-3</id>
    </interactant>
    <interactant intactId="EBI-743099">
        <id>Q969F0</id>
        <label>FATE1</label>
    </interactant>
    <organismsDiffer>false</organismsDiffer>
    <experiments>3</experiments>
</comment>
<comment type="interaction">
    <interactant intactId="EBI-12808270">
        <id>P07307-3</id>
    </interactant>
    <interactant intactId="EBI-712096">
        <id>P30519</id>
        <label>HMOX2</label>
    </interactant>
    <organismsDiffer>false</organismsDiffer>
    <experiments>3</experiments>
</comment>
<comment type="interaction">
    <interactant intactId="EBI-12808270">
        <id>P07307-3</id>
    </interactant>
    <interactant intactId="EBI-12838366">
        <id>Q01638-2</id>
        <label>IL1RL1</label>
    </interactant>
    <organismsDiffer>false</organismsDiffer>
    <experiments>3</experiments>
</comment>
<comment type="interaction">
    <interactant intactId="EBI-12808270">
        <id>P07307-3</id>
    </interactant>
    <interactant intactId="EBI-8070286">
        <id>O43561-2</id>
        <label>LAT</label>
    </interactant>
    <organismsDiffer>false</organismsDiffer>
    <experiments>3</experiments>
</comment>
<comment type="interaction">
    <interactant intactId="EBI-12808270">
        <id>P07307-3</id>
    </interactant>
    <interactant intactId="EBI-12133176">
        <id>Q9UIQ6-2</id>
        <label>LNPEP</label>
    </interactant>
    <organismsDiffer>false</organismsDiffer>
    <experiments>3</experiments>
</comment>
<comment type="interaction">
    <interactant intactId="EBI-12808270">
        <id>P07307-3</id>
    </interactant>
    <interactant intactId="EBI-2816356">
        <id>Q8IX19</id>
        <label>MCEMP1</label>
    </interactant>
    <organismsDiffer>false</organismsDiffer>
    <experiments>3</experiments>
</comment>
<comment type="interaction">
    <interactant intactId="EBI-12808270">
        <id>P07307-3</id>
    </interactant>
    <interactant intactId="EBI-13349813">
        <id>Q8IY49-2</id>
        <label>MMD2</label>
    </interactant>
    <organismsDiffer>false</organismsDiffer>
    <experiments>3</experiments>
</comment>
<comment type="interaction">
    <interactant intactId="EBI-12808270">
        <id>P07307-3</id>
    </interactant>
    <interactant intactId="EBI-12070086">
        <id>Q5J8X5</id>
        <label>MS4A13</label>
    </interactant>
    <organismsDiffer>false</organismsDiffer>
    <experiments>3</experiments>
</comment>
<comment type="interaction">
    <interactant intactId="EBI-12808270">
        <id>P07307-3</id>
    </interactant>
    <interactant intactId="EBI-12842334">
        <id>Q02297-10</id>
        <label>NRG1</label>
    </interactant>
    <organismsDiffer>false</organismsDiffer>
    <experiments>3</experiments>
</comment>
<comment type="interaction">
    <interactant intactId="EBI-12808270">
        <id>P07307-3</id>
    </interactant>
    <interactant intactId="EBI-1054848">
        <id>Q9P0S3</id>
        <label>ORMDL1</label>
    </interactant>
    <organismsDiffer>false</organismsDiffer>
    <experiments>3</experiments>
</comment>
<comment type="interaction">
    <interactant intactId="EBI-12808270">
        <id>P07307-3</id>
    </interactant>
    <interactant intactId="EBI-692836">
        <id>P26678</id>
        <label>PLN</label>
    </interactant>
    <organismsDiffer>false</organismsDiffer>
    <experiments>3</experiments>
</comment>
<comment type="interaction">
    <interactant intactId="EBI-12808270">
        <id>P07307-3</id>
    </interactant>
    <interactant intactId="EBI-608347">
        <id>Q04941</id>
        <label>PLP2</label>
    </interactant>
    <organismsDiffer>false</organismsDiffer>
    <experiments>3</experiments>
</comment>
<comment type="interaction">
    <interactant intactId="EBI-12808270">
        <id>P07307-3</id>
    </interactant>
    <interactant intactId="EBI-2845982">
        <id>Q01453</id>
        <label>PMP22</label>
    </interactant>
    <organismsDiffer>false</organismsDiffer>
    <experiments>3</experiments>
</comment>
<comment type="interaction">
    <interactant intactId="EBI-12808270">
        <id>P07307-3</id>
    </interactant>
    <interactant intactId="EBI-1052363">
        <id>Q9NS64</id>
        <label>RPRM</label>
    </interactant>
    <organismsDiffer>false</organismsDiffer>
    <experiments>3</experiments>
</comment>
<comment type="interaction">
    <interactant intactId="EBI-12808270">
        <id>P07307-3</id>
    </interactant>
    <interactant intactId="EBI-8652744">
        <id>Q96IW7</id>
        <label>SEC22A</label>
    </interactant>
    <organismsDiffer>false</organismsDiffer>
    <experiments>3</experiments>
</comment>
<comment type="interaction">
    <interactant intactId="EBI-12808270">
        <id>P07307-3</id>
    </interactant>
    <interactant intactId="EBI-12870360">
        <id>P78382</id>
        <label>SLC35A1</label>
    </interactant>
    <organismsDiffer>false</organismsDiffer>
    <experiments>3</experiments>
</comment>
<comment type="interaction">
    <interactant intactId="EBI-12808270">
        <id>P07307-3</id>
    </interactant>
    <interactant intactId="EBI-1054782">
        <id>Q8TB61</id>
        <label>SLC35B2</label>
    </interactant>
    <organismsDiffer>false</organismsDiffer>
    <experiments>3</experiments>
</comment>
<comment type="interaction">
    <interactant intactId="EBI-12808270">
        <id>P07307-3</id>
    </interactant>
    <interactant intactId="EBI-741850">
        <id>Q9BZL3</id>
        <label>SMIM3</label>
    </interactant>
    <organismsDiffer>false</organismsDiffer>
    <experiments>3</experiments>
</comment>
<comment type="interaction">
    <interactant intactId="EBI-12808270">
        <id>P07307-3</id>
    </interactant>
    <interactant intactId="EBI-727240">
        <id>Q9UNK0</id>
        <label>STX8</label>
    </interactant>
    <organismsDiffer>false</organismsDiffer>
    <experiments>3</experiments>
</comment>
<comment type="interaction">
    <interactant intactId="EBI-12808270">
        <id>P07307-3</id>
    </interactant>
    <interactant intactId="EBI-355727">
        <id>P02786</id>
        <label>TFRC</label>
    </interactant>
    <organismsDiffer>false</organismsDiffer>
    <experiments>3</experiments>
</comment>
<comment type="interaction">
    <interactant intactId="EBI-12808270">
        <id>P07307-3</id>
    </interactant>
    <interactant intactId="EBI-2844246">
        <id>Q9NV12</id>
        <label>TMEM140</label>
    </interactant>
    <organismsDiffer>false</organismsDiffer>
    <experiments>3</experiments>
</comment>
<comment type="interaction">
    <interactant intactId="EBI-12808270">
        <id>P07307-3</id>
    </interactant>
    <interactant intactId="EBI-2852148">
        <id>Q9H2L4</id>
        <label>TMEM60</label>
    </interactant>
    <organismsDiffer>false</organismsDiffer>
    <experiments>3</experiments>
</comment>
<comment type="interaction">
    <interactant intactId="EBI-12808270">
        <id>P07307-3</id>
    </interactant>
    <interactant intactId="EBI-2548832">
        <id>Q8N661</id>
        <label>TMEM86B</label>
    </interactant>
    <organismsDiffer>false</organismsDiffer>
    <experiments>3</experiments>
</comment>
<comment type="interaction">
    <interactant intactId="EBI-12808270">
        <id>P07307-3</id>
    </interactant>
    <interactant intactId="EBI-11724433">
        <id>Q6ZT21</id>
        <label>TMPPE</label>
    </interactant>
    <organismsDiffer>false</organismsDiffer>
    <experiments>3</experiments>
</comment>
<comment type="interaction">
    <interactant intactId="EBI-12808270">
        <id>P07307-3</id>
    </interactant>
    <interactant intactId="EBI-11996766">
        <id>Q8N609</id>
        <label>TRAM1L1</label>
    </interactant>
    <organismsDiffer>false</organismsDiffer>
    <experiments>3</experiments>
</comment>
<comment type="interaction">
    <interactant intactId="EBI-12808270">
        <id>P07307-3</id>
    </interactant>
    <interactant intactId="EBI-12195249">
        <id>Q5TGU0</id>
        <label>TSPO2</label>
    </interactant>
    <organismsDiffer>false</organismsDiffer>
    <experiments>3</experiments>
</comment>
<comment type="interaction">
    <interactant intactId="EBI-12808270">
        <id>P07307-3</id>
    </interactant>
    <interactant intactId="EBI-2819725">
        <id>Q9Y5Z9</id>
        <label>UBIAD1</label>
    </interactant>
    <organismsDiffer>false</organismsDiffer>
    <experiments>3</experiments>
</comment>
<comment type="interaction">
    <interactant intactId="EBI-12808270">
        <id>P07307-3</id>
    </interactant>
    <interactant intactId="EBI-10179682">
        <id>O00526</id>
        <label>UPK2</label>
    </interactant>
    <organismsDiffer>false</organismsDiffer>
    <experiments>3</experiments>
</comment>
<comment type="interaction">
    <interactant intactId="EBI-12808270">
        <id>P07307-3</id>
    </interactant>
    <interactant intactId="EBI-10191195">
        <id>O95183</id>
        <label>VAMP5</label>
    </interactant>
    <organismsDiffer>false</organismsDiffer>
    <experiments>3</experiments>
</comment>
<comment type="interaction">
    <interactant intactId="EBI-12808270">
        <id>P07307-3</id>
    </interactant>
    <interactant intactId="EBI-723716">
        <id>Q9UEU0</id>
        <label>VTI1B</label>
    </interactant>
    <organismsDiffer>false</organismsDiffer>
    <experiments>3</experiments>
</comment>
<comment type="interaction">
    <interactant intactId="EBI-12808270">
        <id>P07307-3</id>
    </interactant>
    <interactant intactId="EBI-7850136">
        <id>Q9Y548</id>
        <label>YIPF1</label>
    </interactant>
    <organismsDiffer>false</organismsDiffer>
    <experiments>3</experiments>
</comment>
<comment type="subcellular location">
    <subcellularLocation>
        <location>Membrane</location>
        <topology>Single-pass type II membrane protein</topology>
    </subcellularLocation>
</comment>
<comment type="alternative products">
    <event type="alternative splicing"/>
    <isoform>
        <id>P07307-1</id>
        <name>1</name>
        <sequence type="displayed"/>
    </isoform>
    <isoform>
        <id>P07307-2</id>
        <name>2</name>
        <sequence type="described" ref="VSP_003060"/>
    </isoform>
    <isoform>
        <id>P07307-3</id>
        <name>3</name>
        <sequence type="described" ref="VSP_003060 VSP_003061"/>
    </isoform>
</comment>
<comment type="tissue specificity">
    <text>Expressed exclusively in hepatic parenchymal cells.</text>
</comment>
<comment type="miscellaneous">
    <text>Calcium is required for ligand binding.</text>
</comment>
<comment type="online information" name="Functional Glycomics Gateway - Glycan Binding">
    <link uri="http://www.functionalglycomics.org/glycomics/GBPServlet?&amp;operationType=view&amp;cbpId=cbp_hum_Ctlect_216"/>
    <text>Hepatic asialoglycoprotein receptor subunit 2</text>
</comment>
<reference key="1">
    <citation type="journal article" date="1985" name="Proc. Natl. Acad. Sci. U.S.A.">
        <title>Sequence of a second human asialoglycoprotein receptor: conservation of two receptor genes during evolution.</title>
        <authorList>
            <person name="Spiess M."/>
            <person name="Lodish H.F."/>
        </authorList>
    </citation>
    <scope>NUCLEOTIDE SEQUENCE [MRNA] (ISOFORM 1)</scope>
    <scope>VARIANT ARG-85</scope>
</reference>
<reference key="2">
    <citation type="journal article" date="1992" name="Hepatology">
        <title>Differences in the abundance of variably spliced transcripts for the second asialoglycoprotein receptor polypeptide, H2, in normal and transformed human liver.</title>
        <authorList>
            <person name="Paietta E."/>
            <person name="Stockert R.J."/>
            <person name="Racevskis J."/>
        </authorList>
    </citation>
    <scope>NUCLEOTIDE SEQUENCE [MRNA] (ISOFORM 1)</scope>
    <scope>VARIANT ARG-85</scope>
    <source>
        <tissue>Liver</tissue>
    </source>
</reference>
<reference key="3">
    <citation type="journal article" date="2006" name="Nature">
        <title>DNA sequence of human chromosome 17 and analysis of rearrangement in the human lineage.</title>
        <authorList>
            <person name="Zody M.C."/>
            <person name="Garber M."/>
            <person name="Adams D.J."/>
            <person name="Sharpe T."/>
            <person name="Harrow J."/>
            <person name="Lupski J.R."/>
            <person name="Nicholson C."/>
            <person name="Searle S.M."/>
            <person name="Wilming L."/>
            <person name="Young S.K."/>
            <person name="Abouelleil A."/>
            <person name="Allen N.R."/>
            <person name="Bi W."/>
            <person name="Bloom T."/>
            <person name="Borowsky M.L."/>
            <person name="Bugalter B.E."/>
            <person name="Butler J."/>
            <person name="Chang J.L."/>
            <person name="Chen C.-K."/>
            <person name="Cook A."/>
            <person name="Corum B."/>
            <person name="Cuomo C.A."/>
            <person name="de Jong P.J."/>
            <person name="DeCaprio D."/>
            <person name="Dewar K."/>
            <person name="FitzGerald M."/>
            <person name="Gilbert J."/>
            <person name="Gibson R."/>
            <person name="Gnerre S."/>
            <person name="Goldstein S."/>
            <person name="Grafham D.V."/>
            <person name="Grocock R."/>
            <person name="Hafez N."/>
            <person name="Hagopian D.S."/>
            <person name="Hart E."/>
            <person name="Norman C.H."/>
            <person name="Humphray S."/>
            <person name="Jaffe D.B."/>
            <person name="Jones M."/>
            <person name="Kamal M."/>
            <person name="Khodiyar V.K."/>
            <person name="LaButti K."/>
            <person name="Laird G."/>
            <person name="Lehoczky J."/>
            <person name="Liu X."/>
            <person name="Lokyitsang T."/>
            <person name="Loveland J."/>
            <person name="Lui A."/>
            <person name="Macdonald P."/>
            <person name="Major J.E."/>
            <person name="Matthews L."/>
            <person name="Mauceli E."/>
            <person name="McCarroll S.A."/>
            <person name="Mihalev A.H."/>
            <person name="Mudge J."/>
            <person name="Nguyen C."/>
            <person name="Nicol R."/>
            <person name="O'Leary S.B."/>
            <person name="Osoegawa K."/>
            <person name="Schwartz D.C."/>
            <person name="Shaw-Smith C."/>
            <person name="Stankiewicz P."/>
            <person name="Steward C."/>
            <person name="Swarbreck D."/>
            <person name="Venkataraman V."/>
            <person name="Whittaker C.A."/>
            <person name="Yang X."/>
            <person name="Zimmer A.R."/>
            <person name="Bradley A."/>
            <person name="Hubbard T."/>
            <person name="Birren B.W."/>
            <person name="Rogers J."/>
            <person name="Lander E.S."/>
            <person name="Nusbaum C."/>
        </authorList>
    </citation>
    <scope>NUCLEOTIDE SEQUENCE [LARGE SCALE GENOMIC DNA]</scope>
</reference>
<reference key="4">
    <citation type="submission" date="2005-09" db="EMBL/GenBank/DDBJ databases">
        <authorList>
            <person name="Mural R.J."/>
            <person name="Istrail S."/>
            <person name="Sutton G.G."/>
            <person name="Florea L."/>
            <person name="Halpern A.L."/>
            <person name="Mobarry C.M."/>
            <person name="Lippert R."/>
            <person name="Walenz B."/>
            <person name="Shatkay H."/>
            <person name="Dew I."/>
            <person name="Miller J.R."/>
            <person name="Flanigan M.J."/>
            <person name="Edwards N.J."/>
            <person name="Bolanos R."/>
            <person name="Fasulo D."/>
            <person name="Halldorsson B.V."/>
            <person name="Hannenhalli S."/>
            <person name="Turner R."/>
            <person name="Yooseph S."/>
            <person name="Lu F."/>
            <person name="Nusskern D.R."/>
            <person name="Shue B.C."/>
            <person name="Zheng X.H."/>
            <person name="Zhong F."/>
            <person name="Delcher A.L."/>
            <person name="Huson D.H."/>
            <person name="Kravitz S.A."/>
            <person name="Mouchard L."/>
            <person name="Reinert K."/>
            <person name="Remington K.A."/>
            <person name="Clark A.G."/>
            <person name="Waterman M.S."/>
            <person name="Eichler E.E."/>
            <person name="Adams M.D."/>
            <person name="Hunkapiller M.W."/>
            <person name="Myers E.W."/>
            <person name="Venter J.C."/>
        </authorList>
    </citation>
    <scope>NUCLEOTIDE SEQUENCE [LARGE SCALE GENOMIC DNA]</scope>
    <scope>VARIANT ARG-85</scope>
</reference>
<reference key="5">
    <citation type="journal article" date="2004" name="Genome Res.">
        <title>The status, quality, and expansion of the NIH full-length cDNA project: the Mammalian Gene Collection (MGC).</title>
        <authorList>
            <consortium name="The MGC Project Team"/>
        </authorList>
    </citation>
    <scope>NUCLEOTIDE SEQUENCE [LARGE SCALE MRNA] (ISOFORM 3)</scope>
    <source>
        <tissue>Liver</tissue>
    </source>
</reference>
<reference key="6">
    <citation type="journal article" date="2001" name="Genomics">
        <title>Cloning, mapping, and characterization of a human homologue of the yeast longevity assurance gene LAG1.</title>
        <authorList>
            <person name="Pan H."/>
            <person name="Qin W.-X."/>
            <person name="Huo K.-K."/>
            <person name="Wan D.-F."/>
            <person name="Yu Y."/>
            <person name="Xu Z.-G."/>
            <person name="Hu Q.-D."/>
            <person name="Gu K.T."/>
            <person name="Zhou X.-M."/>
            <person name="Jiang H.-Q."/>
            <person name="Zhang P.-P."/>
            <person name="Huang Y."/>
            <person name="Li Y.-Y."/>
            <person name="Gu J.-R."/>
        </authorList>
    </citation>
    <scope>INTERACTION WITH LASS2</scope>
</reference>
<reference key="7">
    <citation type="journal article" date="2005" name="J. Proteome Res.">
        <title>Human plasma N-glycoproteome analysis by immunoaffinity subtraction, hydrazide chemistry, and mass spectrometry.</title>
        <authorList>
            <person name="Liu T."/>
            <person name="Qian W.-J."/>
            <person name="Gritsenko M.A."/>
            <person name="Camp D.G. II"/>
            <person name="Monroe M.E."/>
            <person name="Moore R.J."/>
            <person name="Smith R.D."/>
        </authorList>
    </citation>
    <scope>GLYCOSYLATION [LARGE SCALE ANALYSIS] AT ASN-102</scope>
    <source>
        <tissue>Plasma</tissue>
    </source>
</reference>
<reference key="8">
    <citation type="journal article" date="2009" name="J. Proteome Res.">
        <title>Glycoproteomics analysis of human liver tissue by combination of multiple enzyme digestion and hydrazide chemistry.</title>
        <authorList>
            <person name="Chen R."/>
            <person name="Jiang X."/>
            <person name="Sun D."/>
            <person name="Han G."/>
            <person name="Wang F."/>
            <person name="Ye M."/>
            <person name="Wang L."/>
            <person name="Zou H."/>
        </authorList>
    </citation>
    <scope>GLYCOSYLATION [LARGE SCALE ANALYSIS] AT ASN-102 AND ASN-170</scope>
    <source>
        <tissue>Liver</tissue>
    </source>
</reference>
<reference key="9">
    <citation type="journal article" date="2014" name="J. Proteomics">
        <title>An enzyme assisted RP-RPLC approach for in-depth analysis of human liver phosphoproteome.</title>
        <authorList>
            <person name="Bian Y."/>
            <person name="Song C."/>
            <person name="Cheng K."/>
            <person name="Dong M."/>
            <person name="Wang F."/>
            <person name="Huang J."/>
            <person name="Sun D."/>
            <person name="Wang L."/>
            <person name="Ye M."/>
            <person name="Zou H."/>
        </authorList>
    </citation>
    <scope>IDENTIFICATION BY MASS SPECTROMETRY [LARGE SCALE ANALYSIS]</scope>
    <source>
        <tissue>Liver</tissue>
    </source>
</reference>
<reference key="10">
    <citation type="journal article" date="2016" name="J. Med. Virol.">
        <title>Asialoglycoprotein receptor facilitates infection of PLC/PRF/5 cells by HEV through interaction with ORF2.</title>
        <authorList>
            <person name="Zhang L."/>
            <person name="Tian Y."/>
            <person name="Wen Z."/>
            <person name="Zhang F."/>
            <person name="Qi Y."/>
            <person name="Huang W."/>
            <person name="Zhang H."/>
            <person name="Wang Y."/>
        </authorList>
    </citation>
    <scope>INTERACTION WITH HEPATITIS E VIRUS CAPSID PROTEIN ORF2 (MICROBIAL INFECTION)</scope>
</reference>
<feature type="chain" id="PRO_0000046654" description="Asialoglycoprotein receptor 2">
    <location>
        <begin position="1"/>
        <end position="311"/>
    </location>
</feature>
<feature type="topological domain" description="Cytoplasmic" evidence="3">
    <location>
        <begin position="1"/>
        <end position="58"/>
    </location>
</feature>
<feature type="transmembrane region" description="Helical; Signal-anchor for type II membrane protein" evidence="3">
    <location>
        <begin position="59"/>
        <end position="79"/>
    </location>
</feature>
<feature type="topological domain" description="Extracellular" evidence="3">
    <location>
        <begin position="80"/>
        <end position="311"/>
    </location>
</feature>
<feature type="domain" description="C-type lectin" evidence="4">
    <location>
        <begin position="176"/>
        <end position="302"/>
    </location>
</feature>
<feature type="region of interest" description="Disordered" evidence="5">
    <location>
        <begin position="1"/>
        <end position="44"/>
    </location>
</feature>
<feature type="short sequence motif" description="Endocytosis signal" evidence="3">
    <location>
        <begin position="5"/>
        <end position="8"/>
    </location>
</feature>
<feature type="modified residue" description="Phosphoserine" evidence="2">
    <location>
        <position position="13"/>
    </location>
</feature>
<feature type="lipid moiety-binding region" description="S-palmitoyl cysteine" evidence="1">
    <location>
        <position position="54"/>
    </location>
</feature>
<feature type="glycosylation site" description="N-linked (GlcNAc...) asparagine" evidence="8 9">
    <location>
        <position position="102"/>
    </location>
</feature>
<feature type="glycosylation site" description="N-linked (GlcNAc...) asparagine" evidence="9">
    <location>
        <position position="170"/>
    </location>
</feature>
<feature type="glycosylation site" description="N-linked (GlcNAc...) asparagine">
    <location>
        <position position="305"/>
    </location>
</feature>
<feature type="disulfide bond" evidence="4">
    <location>
        <begin position="177"/>
        <end position="188"/>
    </location>
</feature>
<feature type="disulfide bond" evidence="4">
    <location>
        <begin position="205"/>
        <end position="300"/>
    </location>
</feature>
<feature type="disulfide bond" evidence="4">
    <location>
        <begin position="278"/>
        <end position="292"/>
    </location>
</feature>
<feature type="splice variant" id="VSP_003060" description="In isoform 2 and isoform 3." evidence="13">
    <location>
        <begin position="24"/>
        <end position="42"/>
    </location>
</feature>
<feature type="splice variant" id="VSP_003061" description="In isoform 3." evidence="13">
    <location>
        <begin position="82"/>
        <end position="86"/>
    </location>
</feature>
<feature type="sequence variant" id="VAR_068747" description="In dbSNP:rs2304978." evidence="7 11 12">
    <original>G</original>
    <variation>R</variation>
    <location>
        <position position="85"/>
    </location>
</feature>
<feature type="strand" evidence="14">
    <location>
        <begin position="182"/>
        <end position="184"/>
    </location>
</feature>
<feature type="strand" evidence="14">
    <location>
        <begin position="187"/>
        <end position="191"/>
    </location>
</feature>
<feature type="helix" evidence="14">
    <location>
        <begin position="198"/>
        <end position="207"/>
    </location>
</feature>
<feature type="helix" evidence="14">
    <location>
        <begin position="218"/>
        <end position="228"/>
    </location>
</feature>
<feature type="strand" evidence="14">
    <location>
        <begin position="233"/>
        <end position="238"/>
    </location>
</feature>
<feature type="strand" evidence="14">
    <location>
        <begin position="278"/>
        <end position="281"/>
    </location>
</feature>
<feature type="strand" evidence="14">
    <location>
        <begin position="287"/>
        <end position="290"/>
    </location>
</feature>
<feature type="strand" evidence="14">
    <location>
        <begin position="296"/>
        <end position="303"/>
    </location>
</feature>
<protein>
    <recommendedName>
        <fullName>Asialoglycoprotein receptor 2</fullName>
        <shortName>ASGP-R 2</shortName>
        <shortName>ASGPR 2</shortName>
    </recommendedName>
    <alternativeName>
        <fullName>C-type lectin domain family 4 member H2</fullName>
    </alternativeName>
    <alternativeName>
        <fullName>Hepatic lectin H2</fullName>
        <shortName>HL-2</shortName>
    </alternativeName>
</protein>
<sequence length="311" mass="35092">MAKDFQDIQQLSSEENDHPFHQGEGPGTRRLNPRRGNPFLKGPPPAQPLAQRLCSMVCFSLLALSFNILLLVVICVTGSQSEGHGGAQLQAELRSLKEAFSNFSSSTLTEVQAISTHGGSVGDKITSLGAKLEKQQQDLKADHDALLFHLKHFPVDLRFVACQMELLHSNGSQRTCCPVNWVEHQGSCYWFSHSGKAWAEAEKYCQLENAHLVVINSWEEQKFIVQHTNPFNTWIGLTDSDGSWKWVDGTDYRHNYKNWAVTQPDNWHGHELGGSEDCVEVQPDGRWNDDFCLQVYRWVCEKRRNATGEVA</sequence>
<accession>P07307</accession>
<accession>A6NLV8</accession>
<accession>A8MT12</accession>
<accession>D3DTM9</accession>
<accession>D3DTN0</accession>
<accession>O00448</accession>
<accession>Q03969</accession>
<proteinExistence type="evidence at protein level"/>
<organism>
    <name type="scientific">Homo sapiens</name>
    <name type="common">Human</name>
    <dbReference type="NCBI Taxonomy" id="9606"/>
    <lineage>
        <taxon>Eukaryota</taxon>
        <taxon>Metazoa</taxon>
        <taxon>Chordata</taxon>
        <taxon>Craniata</taxon>
        <taxon>Vertebrata</taxon>
        <taxon>Euteleostomi</taxon>
        <taxon>Mammalia</taxon>
        <taxon>Eutheria</taxon>
        <taxon>Euarchontoglires</taxon>
        <taxon>Primates</taxon>
        <taxon>Haplorrhini</taxon>
        <taxon>Catarrhini</taxon>
        <taxon>Hominidae</taxon>
        <taxon>Homo</taxon>
    </lineage>
</organism>
<evidence type="ECO:0000250" key="1"/>
<evidence type="ECO:0000250" key="2">
    <source>
        <dbReference type="UniProtKB" id="P08290"/>
    </source>
</evidence>
<evidence type="ECO:0000255" key="3"/>
<evidence type="ECO:0000255" key="4">
    <source>
        <dbReference type="PROSITE-ProRule" id="PRU00040"/>
    </source>
</evidence>
<evidence type="ECO:0000256" key="5">
    <source>
        <dbReference type="SAM" id="MobiDB-lite"/>
    </source>
</evidence>
<evidence type="ECO:0000269" key="6">
    <source>
    </source>
</evidence>
<evidence type="ECO:0000269" key="7">
    <source>
    </source>
</evidence>
<evidence type="ECO:0000269" key="8">
    <source>
    </source>
</evidence>
<evidence type="ECO:0000269" key="9">
    <source>
    </source>
</evidence>
<evidence type="ECO:0000269" key="10">
    <source>
    </source>
</evidence>
<evidence type="ECO:0000269" key="11">
    <source>
    </source>
</evidence>
<evidence type="ECO:0000269" key="12">
    <source ref="4"/>
</evidence>
<evidence type="ECO:0000303" key="13">
    <source>
    </source>
</evidence>
<evidence type="ECO:0007829" key="14">
    <source>
        <dbReference type="PDB" id="8URF"/>
    </source>
</evidence>
<gene>
    <name type="primary">ASGR2</name>
    <name type="synonym">CLEC4H2</name>
</gene>
<name>ASGR2_HUMAN</name>